<organism>
    <name type="scientific">Streptococcus pneumoniae (strain 70585)</name>
    <dbReference type="NCBI Taxonomy" id="488221"/>
    <lineage>
        <taxon>Bacteria</taxon>
        <taxon>Bacillati</taxon>
        <taxon>Bacillota</taxon>
        <taxon>Bacilli</taxon>
        <taxon>Lactobacillales</taxon>
        <taxon>Streptococcaceae</taxon>
        <taxon>Streptococcus</taxon>
    </lineage>
</organism>
<accession>C1C6V8</accession>
<feature type="signal peptide" evidence="1">
    <location>
        <begin position="1"/>
        <end position="20"/>
    </location>
</feature>
<feature type="chain" id="PRO_1000164115" description="Foldase protein PrsA">
    <location>
        <begin position="21"/>
        <end position="313"/>
    </location>
</feature>
<feature type="domain" description="PpiC" evidence="1">
    <location>
        <begin position="143"/>
        <end position="241"/>
    </location>
</feature>
<feature type="lipid moiety-binding region" description="N-palmitoyl cysteine" evidence="1">
    <location>
        <position position="21"/>
    </location>
</feature>
<feature type="lipid moiety-binding region" description="S-diacylglycerol cysteine" evidence="1">
    <location>
        <position position="21"/>
    </location>
</feature>
<keyword id="KW-1003">Cell membrane</keyword>
<keyword id="KW-0413">Isomerase</keyword>
<keyword id="KW-0449">Lipoprotein</keyword>
<keyword id="KW-0472">Membrane</keyword>
<keyword id="KW-0564">Palmitate</keyword>
<keyword id="KW-0697">Rotamase</keyword>
<keyword id="KW-0732">Signal</keyword>
<name>PRSA_STRP7</name>
<sequence>MKKKLLAGAITLLSVATLAACSKGSEGADLISMKGDVITEHQFYEQVKSNPSAQQVLLNMTIQKVFEKQYGSELDDKEVDDTIAEEKKQYGENYQRVLSQAGMTLETRKAQIRTSKLVELAVKKVAEAELTDEAYKKAFDEYTPDVTAQIIRLNNEDKAKEVLEKAKAEGADFAQLAKDNSTDEKTKENGGEITFDSASTEVPEQVKKAAFALDVDGVSDVITATGTQAYSSQYYIVKLTKKTEKSSNIDDYKEKLKTVILTQKQNDSTFVQSIIGKELQAANIKVKDQAFQNIFTQYIGGGDSSSSSSTSNE</sequence>
<comment type="function">
    <text evidence="1">Plays a major role in protein secretion by helping the post-translocational extracellular folding of several secreted proteins.</text>
</comment>
<comment type="catalytic activity">
    <reaction evidence="1">
        <text>[protein]-peptidylproline (omega=180) = [protein]-peptidylproline (omega=0)</text>
        <dbReference type="Rhea" id="RHEA:16237"/>
        <dbReference type="Rhea" id="RHEA-COMP:10747"/>
        <dbReference type="Rhea" id="RHEA-COMP:10748"/>
        <dbReference type="ChEBI" id="CHEBI:83833"/>
        <dbReference type="ChEBI" id="CHEBI:83834"/>
        <dbReference type="EC" id="5.2.1.8"/>
    </reaction>
</comment>
<comment type="subcellular location">
    <subcellularLocation>
        <location evidence="1">Cell membrane</location>
        <topology evidence="1">Lipid-anchor</topology>
    </subcellularLocation>
</comment>
<comment type="similarity">
    <text evidence="1">Belongs to the PrsA family.</text>
</comment>
<gene>
    <name evidence="1" type="primary">prsA</name>
    <name type="ordered locus">SP70585_1021</name>
</gene>
<evidence type="ECO:0000255" key="1">
    <source>
        <dbReference type="HAMAP-Rule" id="MF_01145"/>
    </source>
</evidence>
<reference key="1">
    <citation type="journal article" date="2010" name="Genome Biol.">
        <title>Structure and dynamics of the pan-genome of Streptococcus pneumoniae and closely related species.</title>
        <authorList>
            <person name="Donati C."/>
            <person name="Hiller N.L."/>
            <person name="Tettelin H."/>
            <person name="Muzzi A."/>
            <person name="Croucher N.J."/>
            <person name="Angiuoli S.V."/>
            <person name="Oggioni M."/>
            <person name="Dunning Hotopp J.C."/>
            <person name="Hu F.Z."/>
            <person name="Riley D.R."/>
            <person name="Covacci A."/>
            <person name="Mitchell T.J."/>
            <person name="Bentley S.D."/>
            <person name="Kilian M."/>
            <person name="Ehrlich G.D."/>
            <person name="Rappuoli R."/>
            <person name="Moxon E.R."/>
            <person name="Masignani V."/>
        </authorList>
    </citation>
    <scope>NUCLEOTIDE SEQUENCE [LARGE SCALE GENOMIC DNA]</scope>
    <source>
        <strain>70585</strain>
    </source>
</reference>
<protein>
    <recommendedName>
        <fullName evidence="1">Foldase protein PrsA</fullName>
        <ecNumber evidence="1">5.2.1.8</ecNumber>
    </recommendedName>
</protein>
<dbReference type="EC" id="5.2.1.8" evidence="1"/>
<dbReference type="EMBL" id="CP000918">
    <property type="protein sequence ID" value="ACO17251.1"/>
    <property type="molecule type" value="Genomic_DNA"/>
</dbReference>
<dbReference type="RefSeq" id="WP_000727952.1">
    <property type="nucleotide sequence ID" value="NC_012468.1"/>
</dbReference>
<dbReference type="SMR" id="C1C6V8"/>
<dbReference type="KEGG" id="snm:SP70585_1021"/>
<dbReference type="HOGENOM" id="CLU_034646_6_0_9"/>
<dbReference type="Proteomes" id="UP000002211">
    <property type="component" value="Chromosome"/>
</dbReference>
<dbReference type="GO" id="GO:0005886">
    <property type="term" value="C:plasma membrane"/>
    <property type="evidence" value="ECO:0007669"/>
    <property type="project" value="UniProtKB-SubCell"/>
</dbReference>
<dbReference type="GO" id="GO:0003755">
    <property type="term" value="F:peptidyl-prolyl cis-trans isomerase activity"/>
    <property type="evidence" value="ECO:0007669"/>
    <property type="project" value="UniProtKB-UniRule"/>
</dbReference>
<dbReference type="GO" id="GO:0006457">
    <property type="term" value="P:protein folding"/>
    <property type="evidence" value="ECO:0007669"/>
    <property type="project" value="UniProtKB-UniRule"/>
</dbReference>
<dbReference type="Gene3D" id="3.10.50.40">
    <property type="match status" value="1"/>
</dbReference>
<dbReference type="HAMAP" id="MF_01145">
    <property type="entry name" value="Foldase_PrsA"/>
    <property type="match status" value="1"/>
</dbReference>
<dbReference type="InterPro" id="IPR023059">
    <property type="entry name" value="Foldase_PrsA"/>
</dbReference>
<dbReference type="InterPro" id="IPR046357">
    <property type="entry name" value="PPIase_dom_sf"/>
</dbReference>
<dbReference type="InterPro" id="IPR000297">
    <property type="entry name" value="PPIase_PpiC"/>
</dbReference>
<dbReference type="InterPro" id="IPR050245">
    <property type="entry name" value="PrsA_foldase"/>
</dbReference>
<dbReference type="InterPro" id="IPR027304">
    <property type="entry name" value="Trigger_fact/SurA_dom_sf"/>
</dbReference>
<dbReference type="NCBIfam" id="NF002361">
    <property type="entry name" value="PRK01326.1"/>
    <property type="match status" value="1"/>
</dbReference>
<dbReference type="PANTHER" id="PTHR47245:SF1">
    <property type="entry name" value="FOLDASE PROTEIN PRSA"/>
    <property type="match status" value="1"/>
</dbReference>
<dbReference type="PANTHER" id="PTHR47245">
    <property type="entry name" value="PEPTIDYLPROLYL ISOMERASE"/>
    <property type="match status" value="1"/>
</dbReference>
<dbReference type="Pfam" id="PF00639">
    <property type="entry name" value="Rotamase"/>
    <property type="match status" value="1"/>
</dbReference>
<dbReference type="SUPFAM" id="SSF54534">
    <property type="entry name" value="FKBP-like"/>
    <property type="match status" value="1"/>
</dbReference>
<dbReference type="SUPFAM" id="SSF109998">
    <property type="entry name" value="Triger factor/SurA peptide-binding domain-like"/>
    <property type="match status" value="1"/>
</dbReference>
<dbReference type="PROSITE" id="PS50198">
    <property type="entry name" value="PPIC_PPIASE_2"/>
    <property type="match status" value="1"/>
</dbReference>
<dbReference type="PROSITE" id="PS51257">
    <property type="entry name" value="PROKAR_LIPOPROTEIN"/>
    <property type="match status" value="1"/>
</dbReference>
<proteinExistence type="inferred from homology"/>